<gene>
    <name evidence="1" type="primary">rplT</name>
    <name type="ordered locus">Noc_1143</name>
</gene>
<comment type="function">
    <text evidence="1">Binds directly to 23S ribosomal RNA and is necessary for the in vitro assembly process of the 50S ribosomal subunit. It is not involved in the protein synthesizing functions of that subunit.</text>
</comment>
<comment type="similarity">
    <text evidence="1">Belongs to the bacterial ribosomal protein bL20 family.</text>
</comment>
<protein>
    <recommendedName>
        <fullName evidence="1">Large ribosomal subunit protein bL20</fullName>
    </recommendedName>
    <alternativeName>
        <fullName evidence="2">50S ribosomal protein L20</fullName>
    </alternativeName>
</protein>
<keyword id="KW-1185">Reference proteome</keyword>
<keyword id="KW-0687">Ribonucleoprotein</keyword>
<keyword id="KW-0689">Ribosomal protein</keyword>
<keyword id="KW-0694">RNA-binding</keyword>
<keyword id="KW-0699">rRNA-binding</keyword>
<organism>
    <name type="scientific">Nitrosococcus oceani (strain ATCC 19707 / BCRC 17464 / JCM 30415 / NCIMB 11848 / C-107)</name>
    <dbReference type="NCBI Taxonomy" id="323261"/>
    <lineage>
        <taxon>Bacteria</taxon>
        <taxon>Pseudomonadati</taxon>
        <taxon>Pseudomonadota</taxon>
        <taxon>Gammaproteobacteria</taxon>
        <taxon>Chromatiales</taxon>
        <taxon>Chromatiaceae</taxon>
        <taxon>Nitrosococcus</taxon>
    </lineage>
</organism>
<accession>Q3JBZ9</accession>
<name>RL20_NITOC</name>
<dbReference type="EMBL" id="CP000127">
    <property type="protein sequence ID" value="ABA57647.1"/>
    <property type="molecule type" value="Genomic_DNA"/>
</dbReference>
<dbReference type="RefSeq" id="WP_002811571.1">
    <property type="nucleotide sequence ID" value="NC_007484.1"/>
</dbReference>
<dbReference type="SMR" id="Q3JBZ9"/>
<dbReference type="FunCoup" id="Q3JBZ9">
    <property type="interactions" value="618"/>
</dbReference>
<dbReference type="STRING" id="323261.Noc_1143"/>
<dbReference type="KEGG" id="noc:Noc_1143"/>
<dbReference type="eggNOG" id="COG0292">
    <property type="taxonomic scope" value="Bacteria"/>
</dbReference>
<dbReference type="HOGENOM" id="CLU_123265_0_1_6"/>
<dbReference type="InParanoid" id="Q3JBZ9"/>
<dbReference type="Proteomes" id="UP000006838">
    <property type="component" value="Chromosome"/>
</dbReference>
<dbReference type="GO" id="GO:1990904">
    <property type="term" value="C:ribonucleoprotein complex"/>
    <property type="evidence" value="ECO:0007669"/>
    <property type="project" value="UniProtKB-KW"/>
</dbReference>
<dbReference type="GO" id="GO:0005840">
    <property type="term" value="C:ribosome"/>
    <property type="evidence" value="ECO:0007669"/>
    <property type="project" value="UniProtKB-KW"/>
</dbReference>
<dbReference type="GO" id="GO:0019843">
    <property type="term" value="F:rRNA binding"/>
    <property type="evidence" value="ECO:0007669"/>
    <property type="project" value="UniProtKB-UniRule"/>
</dbReference>
<dbReference type="GO" id="GO:0003735">
    <property type="term" value="F:structural constituent of ribosome"/>
    <property type="evidence" value="ECO:0007669"/>
    <property type="project" value="InterPro"/>
</dbReference>
<dbReference type="GO" id="GO:0000027">
    <property type="term" value="P:ribosomal large subunit assembly"/>
    <property type="evidence" value="ECO:0007669"/>
    <property type="project" value="UniProtKB-UniRule"/>
</dbReference>
<dbReference type="GO" id="GO:0006412">
    <property type="term" value="P:translation"/>
    <property type="evidence" value="ECO:0007669"/>
    <property type="project" value="InterPro"/>
</dbReference>
<dbReference type="CDD" id="cd07026">
    <property type="entry name" value="Ribosomal_L20"/>
    <property type="match status" value="1"/>
</dbReference>
<dbReference type="FunFam" id="1.10.1900.20:FF:000001">
    <property type="entry name" value="50S ribosomal protein L20"/>
    <property type="match status" value="1"/>
</dbReference>
<dbReference type="Gene3D" id="6.10.160.10">
    <property type="match status" value="1"/>
</dbReference>
<dbReference type="Gene3D" id="1.10.1900.20">
    <property type="entry name" value="Ribosomal protein L20"/>
    <property type="match status" value="1"/>
</dbReference>
<dbReference type="HAMAP" id="MF_00382">
    <property type="entry name" value="Ribosomal_bL20"/>
    <property type="match status" value="1"/>
</dbReference>
<dbReference type="InterPro" id="IPR005813">
    <property type="entry name" value="Ribosomal_bL20"/>
</dbReference>
<dbReference type="InterPro" id="IPR049946">
    <property type="entry name" value="RIBOSOMAL_L20_CS"/>
</dbReference>
<dbReference type="InterPro" id="IPR035566">
    <property type="entry name" value="Ribosomal_protein_bL20_C"/>
</dbReference>
<dbReference type="NCBIfam" id="TIGR01032">
    <property type="entry name" value="rplT_bact"/>
    <property type="match status" value="1"/>
</dbReference>
<dbReference type="PANTHER" id="PTHR10986">
    <property type="entry name" value="39S RIBOSOMAL PROTEIN L20"/>
    <property type="match status" value="1"/>
</dbReference>
<dbReference type="Pfam" id="PF00453">
    <property type="entry name" value="Ribosomal_L20"/>
    <property type="match status" value="1"/>
</dbReference>
<dbReference type="PRINTS" id="PR00062">
    <property type="entry name" value="RIBOSOMALL20"/>
</dbReference>
<dbReference type="SUPFAM" id="SSF74731">
    <property type="entry name" value="Ribosomal protein L20"/>
    <property type="match status" value="1"/>
</dbReference>
<dbReference type="PROSITE" id="PS00937">
    <property type="entry name" value="RIBOSOMAL_L20"/>
    <property type="match status" value="1"/>
</dbReference>
<feature type="chain" id="PRO_0000243707" description="Large ribosomal subunit protein bL20">
    <location>
        <begin position="1"/>
        <end position="119"/>
    </location>
</feature>
<reference key="1">
    <citation type="journal article" date="2006" name="Appl. Environ. Microbiol.">
        <title>Complete genome sequence of the marine, chemolithoautotrophic, ammonia-oxidizing bacterium Nitrosococcus oceani ATCC 19707.</title>
        <authorList>
            <person name="Klotz M.G."/>
            <person name="Arp D.J."/>
            <person name="Chain P.S.G."/>
            <person name="El-Sheikh A.F."/>
            <person name="Hauser L.J."/>
            <person name="Hommes N.G."/>
            <person name="Larimer F.W."/>
            <person name="Malfatti S.A."/>
            <person name="Norton J.M."/>
            <person name="Poret-Peterson A.T."/>
            <person name="Vergez L.M."/>
            <person name="Ward B.B."/>
        </authorList>
    </citation>
    <scope>NUCLEOTIDE SEQUENCE [LARGE SCALE GENOMIC DNA]</scope>
    <source>
        <strain>ATCC 19707 / BCRC 17464 / JCM 30415 / NCIMB 11848 / C-107</strain>
    </source>
</reference>
<sequence length="119" mass="13607">MPRVKRGVTAHARHKKVIAQAKGYRGRRKNVYRVANQAITRASQYAYRDRRQRKRQFRALWIVRINAAARECGLSYSRLISGLKRAAIEIDRKVLADLAVRDKAAFTTIAEQAKVALSD</sequence>
<proteinExistence type="inferred from homology"/>
<evidence type="ECO:0000255" key="1">
    <source>
        <dbReference type="HAMAP-Rule" id="MF_00382"/>
    </source>
</evidence>
<evidence type="ECO:0000305" key="2"/>